<dbReference type="EMBL" id="Z93377">
    <property type="protein sequence ID" value="CAB07574.2"/>
    <property type="molecule type" value="Genomic_DNA"/>
</dbReference>
<dbReference type="PIR" id="T20808">
    <property type="entry name" value="T20808"/>
</dbReference>
<dbReference type="RefSeq" id="NP_507143.2">
    <property type="nucleotide sequence ID" value="NM_074742.2"/>
</dbReference>
<dbReference type="PaxDb" id="6239-F13A7.2"/>
<dbReference type="EnsemblMetazoa" id="F13A7.2.1">
    <property type="protein sequence ID" value="F13A7.2.1"/>
    <property type="gene ID" value="WBGene00005140"/>
</dbReference>
<dbReference type="GeneID" id="184399"/>
<dbReference type="KEGG" id="cel:CELE_F13A7.2"/>
<dbReference type="UCSC" id="F13A7.2">
    <property type="organism name" value="c. elegans"/>
</dbReference>
<dbReference type="AGR" id="WB:WBGene00005140"/>
<dbReference type="CTD" id="184399"/>
<dbReference type="WormBase" id="F13A7.2">
    <property type="protein sequence ID" value="CE34539"/>
    <property type="gene ID" value="WBGene00005140"/>
    <property type="gene designation" value="srd-63"/>
</dbReference>
<dbReference type="eggNOG" id="ENOG502TG09">
    <property type="taxonomic scope" value="Eukaryota"/>
</dbReference>
<dbReference type="GeneTree" id="ENSGT00970000195825"/>
<dbReference type="HOGENOM" id="CLU_057924_0_0_1"/>
<dbReference type="InParanoid" id="O17800"/>
<dbReference type="PhylomeDB" id="O17800"/>
<dbReference type="PRO" id="PR:O17800"/>
<dbReference type="Proteomes" id="UP000001940">
    <property type="component" value="Chromosome V"/>
</dbReference>
<dbReference type="Bgee" id="WBGene00005140">
    <property type="expression patterns" value="Expressed in multicellular organism and 1 other cell type or tissue"/>
</dbReference>
<dbReference type="GO" id="GO:0016020">
    <property type="term" value="C:membrane"/>
    <property type="evidence" value="ECO:0007669"/>
    <property type="project" value="UniProtKB-SubCell"/>
</dbReference>
<dbReference type="InterPro" id="IPR019421">
    <property type="entry name" value="7TM_GPCR_serpentine_rcpt_Srd"/>
</dbReference>
<dbReference type="InterPro" id="IPR050920">
    <property type="entry name" value="Nematode_rcpt-like_delta"/>
</dbReference>
<dbReference type="PANTHER" id="PTHR22945:SF83">
    <property type="entry name" value="SERPENTINE RECEPTOR, CLASS D (DELTA)-RELATED"/>
    <property type="match status" value="1"/>
</dbReference>
<dbReference type="PANTHER" id="PTHR22945">
    <property type="entry name" value="SERPENTINE RECEPTOR, CLASS D DELTA"/>
    <property type="match status" value="1"/>
</dbReference>
<dbReference type="Pfam" id="PF10317">
    <property type="entry name" value="7TM_GPCR_Srd"/>
    <property type="match status" value="1"/>
</dbReference>
<organism>
    <name type="scientific">Caenorhabditis elegans</name>
    <dbReference type="NCBI Taxonomy" id="6239"/>
    <lineage>
        <taxon>Eukaryota</taxon>
        <taxon>Metazoa</taxon>
        <taxon>Ecdysozoa</taxon>
        <taxon>Nematoda</taxon>
        <taxon>Chromadorea</taxon>
        <taxon>Rhabditida</taxon>
        <taxon>Rhabditina</taxon>
        <taxon>Rhabditomorpha</taxon>
        <taxon>Rhabditoidea</taxon>
        <taxon>Rhabditidae</taxon>
        <taxon>Peloderinae</taxon>
        <taxon>Caenorhabditis</taxon>
    </lineage>
</organism>
<accession>O17800</accession>
<keyword id="KW-0472">Membrane</keyword>
<keyword id="KW-1185">Reference proteome</keyword>
<keyword id="KW-0812">Transmembrane</keyword>
<keyword id="KW-1133">Transmembrane helix</keyword>
<reference key="1">
    <citation type="journal article" date="1998" name="Science">
        <title>Genome sequence of the nematode C. elegans: a platform for investigating biology.</title>
        <authorList>
            <consortium name="The C. elegans sequencing consortium"/>
        </authorList>
    </citation>
    <scope>NUCLEOTIDE SEQUENCE [LARGE SCALE GENOMIC DNA]</scope>
    <source>
        <strain>Bristol N2</strain>
    </source>
</reference>
<evidence type="ECO:0000255" key="1"/>
<evidence type="ECO:0000305" key="2"/>
<gene>
    <name type="primary">srd-63</name>
    <name type="ORF">F13A7.2</name>
</gene>
<sequence length="321" mass="37872">MDFFQYFFRYYWQLVYMICLMLYITMYILIYNFTGKTLQTVKYFLYPSCTAMLIAMTMAFATQTRNIDNTHSMALLCDGFCKYIGPTFCFYCYNLYTAFGIVVNLINLHTMYYRTLCLKYLDAKKVRLWTLVFMWHYLCPLIYLIVIITSPQRHLEVSMETLSLHPNFDYTPYLTFGGFSQAQKELLDKAAMSLSLISMYYPLIGTYWKHKAMKMLKSHMSPNTSDATRAMLQTLIKGLNFQILLPMLRYIPLTAIYFMIKYTGEQFLISQYTITVLGTIPCILDPLVQIYFIRDAIRKFLACNSSPVRRIYDSWASRMII</sequence>
<feature type="chain" id="PRO_0000104533" description="Serpentine receptor class delta-63">
    <location>
        <begin position="1"/>
        <end position="321"/>
    </location>
</feature>
<feature type="transmembrane region" description="Helical" evidence="1">
    <location>
        <begin position="14"/>
        <end position="34"/>
    </location>
</feature>
<feature type="transmembrane region" description="Helical" evidence="1">
    <location>
        <begin position="41"/>
        <end position="61"/>
    </location>
</feature>
<feature type="transmembrane region" description="Helical" evidence="1">
    <location>
        <begin position="83"/>
        <end position="103"/>
    </location>
</feature>
<feature type="transmembrane region" description="Helical" evidence="1">
    <location>
        <begin position="128"/>
        <end position="148"/>
    </location>
</feature>
<feature type="transmembrane region" description="Helical" evidence="1">
    <location>
        <begin position="190"/>
        <end position="208"/>
    </location>
</feature>
<feature type="transmembrane region" description="Helical" evidence="1">
    <location>
        <begin position="240"/>
        <end position="260"/>
    </location>
</feature>
<feature type="transmembrane region" description="Helical" evidence="1">
    <location>
        <begin position="273"/>
        <end position="293"/>
    </location>
</feature>
<protein>
    <recommendedName>
        <fullName>Serpentine receptor class delta-63</fullName>
        <shortName>Protein srd-63</shortName>
    </recommendedName>
</protein>
<name>SRD63_CAEEL</name>
<comment type="subcellular location">
    <subcellularLocation>
        <location evidence="2">Membrane</location>
        <topology evidence="2">Multi-pass membrane protein</topology>
    </subcellularLocation>
</comment>
<comment type="similarity">
    <text evidence="2">Belongs to the nematode receptor-like protein srd family.</text>
</comment>
<proteinExistence type="inferred from homology"/>